<feature type="chain" id="PRO_0000071068" description="DnaJ homolog subfamily C member 12">
    <location>
        <begin position="1"/>
        <end position="198"/>
    </location>
</feature>
<feature type="domain" description="J" evidence="3">
    <location>
        <begin position="14"/>
        <end position="79"/>
    </location>
</feature>
<feature type="region of interest" description="Disordered" evidence="4">
    <location>
        <begin position="121"/>
        <end position="183"/>
    </location>
</feature>
<feature type="compositionally biased region" description="Basic and acidic residues" evidence="4">
    <location>
        <begin position="126"/>
        <end position="156"/>
    </location>
</feature>
<feature type="modified residue" description="N-acetylmethionine" evidence="2">
    <location>
        <position position="1"/>
    </location>
</feature>
<feature type="modified residue" description="Phosphoserine" evidence="2">
    <location>
        <position position="160"/>
    </location>
</feature>
<feature type="modified residue" description="Phosphoserine" evidence="1">
    <location>
        <position position="166"/>
    </location>
</feature>
<feature type="modified residue" description="Phosphoserine" evidence="1">
    <location>
        <position position="182"/>
    </location>
</feature>
<proteinExistence type="evidence at transcript level"/>
<accession>Q925T0</accession>
<accession>Q498U2</accession>
<protein>
    <recommendedName>
        <fullName>DnaJ homolog subfamily C member 12</fullName>
    </recommendedName>
    <alternativeName>
        <fullName>J domain-containing protein 1</fullName>
    </alternativeName>
</protein>
<comment type="function">
    <text evidence="2">Probable co-chaperone that participates in the proper folding of biopterin-dependent aromatic amino acid hydroxylases, which include phenylalanine-4-hydroxylase (PAH), tyrosine 3-monooxygenase (TH) and peripheral and neuronal tryptophan hydroxylases (TPH1 and TPH2).</text>
</comment>
<comment type="subunit">
    <text evidence="1 2">Interacts with HSPA8 (By similarity). Interacts with TPH1 (By similarity). Interacts with TPH2 (By similarity).</text>
</comment>
<comment type="subcellular location">
    <subcellularLocation>
        <location evidence="2">Cytoplasm</location>
    </subcellularLocation>
</comment>
<name>DJC12_RAT</name>
<organism>
    <name type="scientific">Rattus norvegicus</name>
    <name type="common">Rat</name>
    <dbReference type="NCBI Taxonomy" id="10116"/>
    <lineage>
        <taxon>Eukaryota</taxon>
        <taxon>Metazoa</taxon>
        <taxon>Chordata</taxon>
        <taxon>Craniata</taxon>
        <taxon>Vertebrata</taxon>
        <taxon>Euteleostomi</taxon>
        <taxon>Mammalia</taxon>
        <taxon>Eutheria</taxon>
        <taxon>Euarchontoglires</taxon>
        <taxon>Glires</taxon>
        <taxon>Rodentia</taxon>
        <taxon>Myomorpha</taxon>
        <taxon>Muroidea</taxon>
        <taxon>Muridae</taxon>
        <taxon>Murinae</taxon>
        <taxon>Rattus</taxon>
    </lineage>
</organism>
<keyword id="KW-0007">Acetylation</keyword>
<keyword id="KW-0143">Chaperone</keyword>
<keyword id="KW-0963">Cytoplasm</keyword>
<keyword id="KW-0597">Phosphoprotein</keyword>
<keyword id="KW-1185">Reference proteome</keyword>
<sequence length="198" mass="22978">MDAILNYRPEGSEDYYTLLGCDELSSVEQILAEFKVRALECHPDKHPENSKAVETFQKLQKAKEILSNAESRARYDHWRRSQMSMSFEQWEALADSVKTSMHWAVRSKKDLMLEGSEQTYTNTAQNKERSEQRETKQGDPDSTPEKMMQKESESPEKGISPQNPDSPGLSDWNCGHLHFRWSGDTPSELLRKFRNYEI</sequence>
<dbReference type="EMBL" id="AB062135">
    <property type="protein sequence ID" value="BAB55876.1"/>
    <property type="molecule type" value="mRNA"/>
</dbReference>
<dbReference type="EMBL" id="BC100072">
    <property type="protein sequence ID" value="AAI00073.1"/>
    <property type="molecule type" value="mRNA"/>
</dbReference>
<dbReference type="RefSeq" id="NP_001029204.1">
    <property type="nucleotide sequence ID" value="NM_001034032.1"/>
</dbReference>
<dbReference type="SMR" id="Q925T0"/>
<dbReference type="FunCoup" id="Q925T0">
    <property type="interactions" value="548"/>
</dbReference>
<dbReference type="STRING" id="10116.ENSRNOP00000075353"/>
<dbReference type="PhosphoSitePlus" id="Q925T0"/>
<dbReference type="PaxDb" id="10116-ENSRNOP00000000426"/>
<dbReference type="Ensembl" id="ENSRNOT00000082430.2">
    <property type="protein sequence ID" value="ENSRNOP00000075353.1"/>
    <property type="gene ID" value="ENSRNOG00000051960.2"/>
</dbReference>
<dbReference type="GeneID" id="619393"/>
<dbReference type="KEGG" id="rno:619393"/>
<dbReference type="AGR" id="RGD:1591898"/>
<dbReference type="CTD" id="56521"/>
<dbReference type="RGD" id="1591898">
    <property type="gene designation" value="Dnajc12"/>
</dbReference>
<dbReference type="eggNOG" id="KOG0691">
    <property type="taxonomic scope" value="Eukaryota"/>
</dbReference>
<dbReference type="GeneTree" id="ENSGT00940000159378"/>
<dbReference type="HOGENOM" id="CLU_118857_2_0_1"/>
<dbReference type="InParanoid" id="Q925T0"/>
<dbReference type="OMA" id="HWAVRDK"/>
<dbReference type="OrthoDB" id="68714at9989"/>
<dbReference type="PhylomeDB" id="Q925T0"/>
<dbReference type="TreeFam" id="TF105171"/>
<dbReference type="PRO" id="PR:Q925T0"/>
<dbReference type="Proteomes" id="UP000002494">
    <property type="component" value="Chromosome 20"/>
</dbReference>
<dbReference type="Bgee" id="ENSRNOG00000051960">
    <property type="expression patterns" value="Expressed in cerebellum and 20 other cell types or tissues"/>
</dbReference>
<dbReference type="GO" id="GO:0005737">
    <property type="term" value="C:cytoplasm"/>
    <property type="evidence" value="ECO:0000250"/>
    <property type="project" value="UniProtKB"/>
</dbReference>
<dbReference type="CDD" id="cd06257">
    <property type="entry name" value="DnaJ"/>
    <property type="match status" value="1"/>
</dbReference>
<dbReference type="FunFam" id="1.10.287.110:FF:000049">
    <property type="entry name" value="DnaJ homolog subfamily C member 12"/>
    <property type="match status" value="1"/>
</dbReference>
<dbReference type="Gene3D" id="1.10.287.110">
    <property type="entry name" value="DnaJ domain"/>
    <property type="match status" value="1"/>
</dbReference>
<dbReference type="InterPro" id="IPR001623">
    <property type="entry name" value="DnaJ_domain"/>
</dbReference>
<dbReference type="InterPro" id="IPR036869">
    <property type="entry name" value="J_dom_sf"/>
</dbReference>
<dbReference type="InterPro" id="IPR029827">
    <property type="entry name" value="JDP1-like"/>
</dbReference>
<dbReference type="PANTHER" id="PTHR44500">
    <property type="entry name" value="DNAJ HOMOLOG SUBFAMILY C MEMBER 12"/>
    <property type="match status" value="1"/>
</dbReference>
<dbReference type="PANTHER" id="PTHR44500:SF1">
    <property type="entry name" value="DNAJ HOMOLOG SUBFAMILY C MEMBER 12"/>
    <property type="match status" value="1"/>
</dbReference>
<dbReference type="Pfam" id="PF00226">
    <property type="entry name" value="DnaJ"/>
    <property type="match status" value="1"/>
</dbReference>
<dbReference type="PRINTS" id="PR00625">
    <property type="entry name" value="JDOMAIN"/>
</dbReference>
<dbReference type="SMART" id="SM00271">
    <property type="entry name" value="DnaJ"/>
    <property type="match status" value="1"/>
</dbReference>
<dbReference type="SUPFAM" id="SSF46565">
    <property type="entry name" value="Chaperone J-domain"/>
    <property type="match status" value="1"/>
</dbReference>
<dbReference type="PROSITE" id="PS50076">
    <property type="entry name" value="DNAJ_2"/>
    <property type="match status" value="1"/>
</dbReference>
<gene>
    <name type="primary">Dnajc12</name>
    <name type="synonym">Jdp1</name>
</gene>
<evidence type="ECO:0000250" key="1">
    <source>
        <dbReference type="UniProtKB" id="Q9R022"/>
    </source>
</evidence>
<evidence type="ECO:0000250" key="2">
    <source>
        <dbReference type="UniProtKB" id="Q9UKB3"/>
    </source>
</evidence>
<evidence type="ECO:0000255" key="3">
    <source>
        <dbReference type="PROSITE-ProRule" id="PRU00286"/>
    </source>
</evidence>
<evidence type="ECO:0000256" key="4">
    <source>
        <dbReference type="SAM" id="MobiDB-lite"/>
    </source>
</evidence>
<reference key="1">
    <citation type="journal article" date="2000" name="Biochim. Biophys. Acta">
        <title>Characterization of JDP genes, an evolutionarily conserved J domain-only protein family, from human and moths.</title>
        <authorList>
            <person name="Lee J."/>
            <person name="Hahn Y."/>
            <person name="Yun J.H."/>
            <person name="Mita K."/>
            <person name="Chung J.H."/>
        </authorList>
    </citation>
    <scope>NUCLEOTIDE SEQUENCE [MRNA]</scope>
</reference>
<reference key="2">
    <citation type="journal article" date="2004" name="Genome Res.">
        <title>The status, quality, and expansion of the NIH full-length cDNA project: the Mammalian Gene Collection (MGC).</title>
        <authorList>
            <consortium name="The MGC Project Team"/>
        </authorList>
    </citation>
    <scope>NUCLEOTIDE SEQUENCE [LARGE SCALE MRNA]</scope>
    <source>
        <tissue>Liver</tissue>
    </source>
</reference>